<accession>Q03G99</accession>
<feature type="chain" id="PRO_0000296521" description="Large ribosomal subunit protein bL32">
    <location>
        <begin position="1"/>
        <end position="60"/>
    </location>
</feature>
<organism>
    <name type="scientific">Pediococcus pentosaceus (strain ATCC 25745 / CCUG 21536 / LMG 10740 / 183-1w)</name>
    <dbReference type="NCBI Taxonomy" id="278197"/>
    <lineage>
        <taxon>Bacteria</taxon>
        <taxon>Bacillati</taxon>
        <taxon>Bacillota</taxon>
        <taxon>Bacilli</taxon>
        <taxon>Lactobacillales</taxon>
        <taxon>Lactobacillaceae</taxon>
        <taxon>Pediococcus</taxon>
    </lineage>
</organism>
<evidence type="ECO:0000255" key="1">
    <source>
        <dbReference type="HAMAP-Rule" id="MF_00340"/>
    </source>
</evidence>
<evidence type="ECO:0000305" key="2"/>
<proteinExistence type="inferred from homology"/>
<reference key="1">
    <citation type="journal article" date="2006" name="Proc. Natl. Acad. Sci. U.S.A.">
        <title>Comparative genomics of the lactic acid bacteria.</title>
        <authorList>
            <person name="Makarova K.S."/>
            <person name="Slesarev A."/>
            <person name="Wolf Y.I."/>
            <person name="Sorokin A."/>
            <person name="Mirkin B."/>
            <person name="Koonin E.V."/>
            <person name="Pavlov A."/>
            <person name="Pavlova N."/>
            <person name="Karamychev V."/>
            <person name="Polouchine N."/>
            <person name="Shakhova V."/>
            <person name="Grigoriev I."/>
            <person name="Lou Y."/>
            <person name="Rohksar D."/>
            <person name="Lucas S."/>
            <person name="Huang K."/>
            <person name="Goodstein D.M."/>
            <person name="Hawkins T."/>
            <person name="Plengvidhya V."/>
            <person name="Welker D."/>
            <person name="Hughes J."/>
            <person name="Goh Y."/>
            <person name="Benson A."/>
            <person name="Baldwin K."/>
            <person name="Lee J.-H."/>
            <person name="Diaz-Muniz I."/>
            <person name="Dosti B."/>
            <person name="Smeianov V."/>
            <person name="Wechter W."/>
            <person name="Barabote R."/>
            <person name="Lorca G."/>
            <person name="Altermann E."/>
            <person name="Barrangou R."/>
            <person name="Ganesan B."/>
            <person name="Xie Y."/>
            <person name="Rawsthorne H."/>
            <person name="Tamir D."/>
            <person name="Parker C."/>
            <person name="Breidt F."/>
            <person name="Broadbent J.R."/>
            <person name="Hutkins R."/>
            <person name="O'Sullivan D."/>
            <person name="Steele J."/>
            <person name="Unlu G."/>
            <person name="Saier M.H. Jr."/>
            <person name="Klaenhammer T."/>
            <person name="Richardson P."/>
            <person name="Kozyavkin S."/>
            <person name="Weimer B.C."/>
            <person name="Mills D.A."/>
        </authorList>
    </citation>
    <scope>NUCLEOTIDE SEQUENCE [LARGE SCALE GENOMIC DNA]</scope>
    <source>
        <strain>ATCC 25745 / CCUG 21536 / LMG 10740 / 183-1w</strain>
    </source>
</reference>
<protein>
    <recommendedName>
        <fullName evidence="1">Large ribosomal subunit protein bL32</fullName>
    </recommendedName>
    <alternativeName>
        <fullName evidence="2">50S ribosomal protein L32</fullName>
    </alternativeName>
</protein>
<dbReference type="EMBL" id="CP000422">
    <property type="protein sequence ID" value="ABJ67773.1"/>
    <property type="molecule type" value="Genomic_DNA"/>
</dbReference>
<dbReference type="RefSeq" id="WP_002831400.1">
    <property type="nucleotide sequence ID" value="NC_008525.1"/>
</dbReference>
<dbReference type="SMR" id="Q03G99"/>
<dbReference type="STRING" id="278197.PEPE_0712"/>
<dbReference type="GeneID" id="57365671"/>
<dbReference type="KEGG" id="ppe:PEPE_0712"/>
<dbReference type="eggNOG" id="COG0333">
    <property type="taxonomic scope" value="Bacteria"/>
</dbReference>
<dbReference type="HOGENOM" id="CLU_129084_1_3_9"/>
<dbReference type="OrthoDB" id="9812874at2"/>
<dbReference type="Proteomes" id="UP000000773">
    <property type="component" value="Chromosome"/>
</dbReference>
<dbReference type="GO" id="GO:0015934">
    <property type="term" value="C:large ribosomal subunit"/>
    <property type="evidence" value="ECO:0007669"/>
    <property type="project" value="InterPro"/>
</dbReference>
<dbReference type="GO" id="GO:0003735">
    <property type="term" value="F:structural constituent of ribosome"/>
    <property type="evidence" value="ECO:0007669"/>
    <property type="project" value="InterPro"/>
</dbReference>
<dbReference type="GO" id="GO:0006412">
    <property type="term" value="P:translation"/>
    <property type="evidence" value="ECO:0007669"/>
    <property type="project" value="UniProtKB-UniRule"/>
</dbReference>
<dbReference type="HAMAP" id="MF_00340">
    <property type="entry name" value="Ribosomal_bL32"/>
    <property type="match status" value="1"/>
</dbReference>
<dbReference type="InterPro" id="IPR002677">
    <property type="entry name" value="Ribosomal_bL32"/>
</dbReference>
<dbReference type="InterPro" id="IPR044957">
    <property type="entry name" value="Ribosomal_bL32_bact"/>
</dbReference>
<dbReference type="InterPro" id="IPR011332">
    <property type="entry name" value="Ribosomal_zn-bd"/>
</dbReference>
<dbReference type="NCBIfam" id="TIGR01031">
    <property type="entry name" value="rpmF_bact"/>
    <property type="match status" value="1"/>
</dbReference>
<dbReference type="PANTHER" id="PTHR35534">
    <property type="entry name" value="50S RIBOSOMAL PROTEIN L32"/>
    <property type="match status" value="1"/>
</dbReference>
<dbReference type="PANTHER" id="PTHR35534:SF1">
    <property type="entry name" value="LARGE RIBOSOMAL SUBUNIT PROTEIN BL32"/>
    <property type="match status" value="1"/>
</dbReference>
<dbReference type="Pfam" id="PF01783">
    <property type="entry name" value="Ribosomal_L32p"/>
    <property type="match status" value="1"/>
</dbReference>
<dbReference type="SUPFAM" id="SSF57829">
    <property type="entry name" value="Zn-binding ribosomal proteins"/>
    <property type="match status" value="1"/>
</dbReference>
<name>RL32_PEDPA</name>
<comment type="similarity">
    <text evidence="1">Belongs to the bacterial ribosomal protein bL32 family.</text>
</comment>
<keyword id="KW-0687">Ribonucleoprotein</keyword>
<keyword id="KW-0689">Ribosomal protein</keyword>
<sequence>MAVPARRTSKTRKRNRRGHIKLTTPGLAPCPNCGELRVSHRVCPSCGYYNGKQVIDVKAN</sequence>
<gene>
    <name evidence="1" type="primary">rpmF</name>
    <name type="ordered locus">PEPE_0712</name>
</gene>